<comment type="function">
    <text evidence="7">Hybrid PKS-NRPS synthetase; part of the gene cluster that mediates the biosynthesis of xenoacremones such as xenoacremone A, a compound that shows inhibitory activity toward the PI3K/AKT signaling pathway and which has the ability to induce apoptosis of A549 lung cancer cells (PubMed:34900544). Within the pathway, cooperation of the hybrid PKS-NRPS xenE and the trans-acting enoyl reductase xenG is responsible for the formation of the reduced tyrosine-nonaketide derivative (PubMed:34900544). The PKS module of xenE acted in combination with the trans-acting enoyl reductase xenG to produce a double-methylated nonaketide attached to the ACP domain (PubMed:34900544). In parallel, the adenylation (A) domain of the NRPS module activated L-tyrosine, which was then transferred to the ACP domain (PubMed:34900544). The condensation (C) domain subsequently linked this group to the polyketide chain, forming an enzyme-bound amide (PubMed:34900544). Reductive release by the C-terminal R domain afforded the aldehyde derivative (PubMed:34900544). The alpha/beta hydrolase xenA then accelerates intramolecular nucleophilic attack to give a pyrrolidone derivative (PubMed:34900544). Subsequently, three enzymes, xenF, xenD, and xenC, coordinately participate in the conversion to xenoacremone B (PubMed:34900544). XenF catalyzes sigmatropic rearrangement to form an A-ring, which leads to an unusual intermediate with a hexane ring, which is required for the formation of the tricarbocyclic product (PubMed:34900544). Epoxidation catalyzed by xenD and the formation of the paracyclophane ether catalyzed by xenC initiate a spontaneous intramolecular Diels-Alder (IMDA) reaction to yield xenoacremone B (PubMed:34900544). Spontaneous hydration of xenoacremone B leads to the formation of xenoacremone A, which undergoes subsequent methylation to afford xenoacremone C (PubMed:34900544).</text>
</comment>
<comment type="pathway">
    <text evidence="7">Mycotoxin biosynthesis.</text>
</comment>
<comment type="domain">
    <text evidence="10">NRP synthetases are composed of discrete domains (adenylation (A), thiolation (T) or peptidyl carrier protein (PCP) and condensation (C) domains) which when grouped together are referred to as a single module. Each module is responsible for the recognition (via the A domain) and incorporation of a single amino acid into the growing peptide product. Thus, an NRP synthetase is generally composed of one or more modules and can terminate in a thioesterase domain (TE) that releases the newly synthesized peptide from the enzyme. Occasionally, epimerase (E) domains (responsible for L- to D-amino acid conversion) are present within the NRP synthetase. XenE also contains a polyketide synthase module (PKS) consisting of several catalytic domains including a ketoacyl synthase domain (KS), an acyl transferase domain (AT), a dehydratase domain (DH), a methyltransferase domain (cMeT), and a ketoreductase domain (KR). Instead of a thioesterase domain (TE), XenE finishes with a reductase-like domain (R) for peptide release. XenE has the following architecture: KS-MAT-DH-cMET-KR-PCP-C-A-T-R.</text>
</comment>
<comment type="disruption phenotype">
    <text evidence="7">Abolishes the production of xenoacremones A, B and C.</text>
</comment>
<comment type="similarity">
    <text evidence="9">In the C-terminal section; belongs to the NRP synthetase family.</text>
</comment>
<accession>A0A7L9EYL1</accession>
<name>XENE_XENSI</name>
<feature type="chain" id="PRO_0000456859" description="Hybrid PKS-NRPS synthetase xenE">
    <location>
        <begin position="1"/>
        <end position="3999"/>
    </location>
</feature>
<feature type="domain" description="Ketosynthase family 3 (KS3)" evidence="3 10">
    <location>
        <begin position="13"/>
        <end position="449"/>
    </location>
</feature>
<feature type="domain" description="Malonyl-CoA:ACP transacylase (MAT)" evidence="1 10">
    <location>
        <begin position="562"/>
        <end position="879"/>
    </location>
</feature>
<feature type="domain" description="PKS/mFAS DH" evidence="4">
    <location>
        <begin position="949"/>
        <end position="1253"/>
    </location>
</feature>
<feature type="domain" description="Ketoreductase (KR)" evidence="1 10">
    <location>
        <begin position="2133"/>
        <end position="2306"/>
    </location>
</feature>
<feature type="domain" description="Carrier 1" evidence="2">
    <location>
        <begin position="2414"/>
        <end position="2495"/>
    </location>
</feature>
<feature type="domain" description="Carrier 2" evidence="2">
    <location>
        <begin position="3562"/>
        <end position="3642"/>
    </location>
</feature>
<feature type="region of interest" description="N-terminal hotdog fold" evidence="4">
    <location>
        <begin position="949"/>
        <end position="1084"/>
    </location>
</feature>
<feature type="region of interest" description="Dehydratase (DH) domain" evidence="1 10">
    <location>
        <begin position="950"/>
        <end position="1252"/>
    </location>
</feature>
<feature type="region of interest" description="C-terminal hotdog fold" evidence="4">
    <location>
        <begin position="1099"/>
        <end position="1253"/>
    </location>
</feature>
<feature type="region of interest" description="Methyltransferase (cMeT) domain" evidence="1 10">
    <location>
        <begin position="1298"/>
        <end position="1593"/>
    </location>
</feature>
<feature type="region of interest" description="Disordered" evidence="6">
    <location>
        <begin position="2501"/>
        <end position="2573"/>
    </location>
</feature>
<feature type="region of interest" description="Condensation" evidence="1 10">
    <location>
        <begin position="2580"/>
        <end position="3015"/>
    </location>
</feature>
<feature type="region of interest" description="Adenylation" evidence="1 10">
    <location>
        <begin position="3045"/>
        <end position="3453"/>
    </location>
</feature>
<feature type="region of interest" description="Reductase-like (R) domain (R)" evidence="1 10">
    <location>
        <begin position="3681"/>
        <end position="3900"/>
    </location>
</feature>
<feature type="compositionally biased region" description="Low complexity" evidence="6">
    <location>
        <begin position="2526"/>
        <end position="2554"/>
    </location>
</feature>
<feature type="active site" description="For beta-ketoacyl synthase activity" evidence="3 5">
    <location>
        <position position="186"/>
    </location>
</feature>
<feature type="active site" description="For beta-ketoacyl synthase activity" evidence="3">
    <location>
        <position position="325"/>
    </location>
</feature>
<feature type="active site" description="For beta-ketoacyl synthase activity" evidence="3">
    <location>
        <position position="369"/>
    </location>
</feature>
<feature type="active site" description="Proton acceptor; for dehydratase activity" evidence="4">
    <location>
        <position position="981"/>
    </location>
</feature>
<feature type="active site" description="Proton donor; for dehydratase activity" evidence="4">
    <location>
        <position position="1159"/>
    </location>
</feature>
<feature type="modified residue" description="O-(pantetheine 4'-phosphoryl)serine" evidence="2">
    <location>
        <position position="2455"/>
    </location>
</feature>
<feature type="modified residue" description="O-(pantetheine 4'-phosphoryl)serine" evidence="2">
    <location>
        <position position="3602"/>
    </location>
</feature>
<proteinExistence type="evidence at protein level"/>
<gene>
    <name evidence="8" type="primary">xenE</name>
</gene>
<dbReference type="EC" id="2.3.1.-" evidence="7"/>
<dbReference type="EC" id="6.3.2.-" evidence="7"/>
<dbReference type="EMBL" id="MT876600">
    <property type="protein sequence ID" value="QOJ72663.1"/>
    <property type="molecule type" value="Genomic_DNA"/>
</dbReference>
<dbReference type="SMR" id="A0A7L9EYL1"/>
<dbReference type="GO" id="GO:0004315">
    <property type="term" value="F:3-oxoacyl-[acyl-carrier-protein] synthase activity"/>
    <property type="evidence" value="ECO:0007669"/>
    <property type="project" value="InterPro"/>
</dbReference>
<dbReference type="GO" id="GO:0004312">
    <property type="term" value="F:fatty acid synthase activity"/>
    <property type="evidence" value="ECO:0007669"/>
    <property type="project" value="TreeGrafter"/>
</dbReference>
<dbReference type="GO" id="GO:0016874">
    <property type="term" value="F:ligase activity"/>
    <property type="evidence" value="ECO:0007669"/>
    <property type="project" value="UniProtKB-KW"/>
</dbReference>
<dbReference type="GO" id="GO:0008168">
    <property type="term" value="F:methyltransferase activity"/>
    <property type="evidence" value="ECO:0007669"/>
    <property type="project" value="UniProtKB-KW"/>
</dbReference>
<dbReference type="GO" id="GO:0016491">
    <property type="term" value="F:oxidoreductase activity"/>
    <property type="evidence" value="ECO:0007669"/>
    <property type="project" value="UniProtKB-KW"/>
</dbReference>
<dbReference type="GO" id="GO:0031177">
    <property type="term" value="F:phosphopantetheine binding"/>
    <property type="evidence" value="ECO:0007669"/>
    <property type="project" value="InterPro"/>
</dbReference>
<dbReference type="GO" id="GO:0006633">
    <property type="term" value="P:fatty acid biosynthetic process"/>
    <property type="evidence" value="ECO:0007669"/>
    <property type="project" value="InterPro"/>
</dbReference>
<dbReference type="GO" id="GO:0032259">
    <property type="term" value="P:methylation"/>
    <property type="evidence" value="ECO:0007669"/>
    <property type="project" value="UniProtKB-KW"/>
</dbReference>
<dbReference type="GO" id="GO:0009403">
    <property type="term" value="P:toxin biosynthetic process"/>
    <property type="evidence" value="ECO:0007669"/>
    <property type="project" value="UniProtKB-ARBA"/>
</dbReference>
<dbReference type="CDD" id="cd05930">
    <property type="entry name" value="A_NRPS"/>
    <property type="match status" value="1"/>
</dbReference>
<dbReference type="CDD" id="cd02440">
    <property type="entry name" value="AdoMet_MTases"/>
    <property type="match status" value="1"/>
</dbReference>
<dbReference type="CDD" id="cd19532">
    <property type="entry name" value="C_PKS-NRPS"/>
    <property type="match status" value="1"/>
</dbReference>
<dbReference type="CDD" id="cd00833">
    <property type="entry name" value="PKS"/>
    <property type="match status" value="1"/>
</dbReference>
<dbReference type="FunFam" id="3.40.47.10:FF:000019">
    <property type="entry name" value="Polyketide synthase type I"/>
    <property type="match status" value="1"/>
</dbReference>
<dbReference type="Gene3D" id="3.30.300.30">
    <property type="match status" value="1"/>
</dbReference>
<dbReference type="Gene3D" id="3.40.47.10">
    <property type="match status" value="1"/>
</dbReference>
<dbReference type="Gene3D" id="1.10.1200.10">
    <property type="entry name" value="ACP-like"/>
    <property type="match status" value="2"/>
</dbReference>
<dbReference type="Gene3D" id="3.30.559.10">
    <property type="entry name" value="Chloramphenicol acetyltransferase-like domain"/>
    <property type="match status" value="1"/>
</dbReference>
<dbReference type="Gene3D" id="3.40.366.10">
    <property type="entry name" value="Malonyl-Coenzyme A Acyl Carrier Protein, domain 2"/>
    <property type="match status" value="1"/>
</dbReference>
<dbReference type="Gene3D" id="3.40.50.12780">
    <property type="entry name" value="N-terminal domain of ligase-like"/>
    <property type="match status" value="1"/>
</dbReference>
<dbReference type="Gene3D" id="3.40.50.720">
    <property type="entry name" value="NAD(P)-binding Rossmann-like Domain"/>
    <property type="match status" value="3"/>
</dbReference>
<dbReference type="Gene3D" id="3.30.559.30">
    <property type="entry name" value="Nonribosomal peptide synthetase, condensation domain"/>
    <property type="match status" value="1"/>
</dbReference>
<dbReference type="Gene3D" id="3.10.129.110">
    <property type="entry name" value="Polyketide synthase dehydratase"/>
    <property type="match status" value="1"/>
</dbReference>
<dbReference type="Gene3D" id="3.40.50.150">
    <property type="entry name" value="Vaccinia Virus protein VP39"/>
    <property type="match status" value="1"/>
</dbReference>
<dbReference type="InterPro" id="IPR010071">
    <property type="entry name" value="AA_adenyl_dom"/>
</dbReference>
<dbReference type="InterPro" id="IPR001227">
    <property type="entry name" value="Ac_transferase_dom_sf"/>
</dbReference>
<dbReference type="InterPro" id="IPR036736">
    <property type="entry name" value="ACP-like_sf"/>
</dbReference>
<dbReference type="InterPro" id="IPR014043">
    <property type="entry name" value="Acyl_transferase_dom"/>
</dbReference>
<dbReference type="InterPro" id="IPR016035">
    <property type="entry name" value="Acyl_Trfase/lysoPLipase"/>
</dbReference>
<dbReference type="InterPro" id="IPR045851">
    <property type="entry name" value="AMP-bd_C_sf"/>
</dbReference>
<dbReference type="InterPro" id="IPR020845">
    <property type="entry name" value="AMP-binding_CS"/>
</dbReference>
<dbReference type="InterPro" id="IPR000873">
    <property type="entry name" value="AMP-dep_synth/lig_dom"/>
</dbReference>
<dbReference type="InterPro" id="IPR042099">
    <property type="entry name" value="ANL_N_sf"/>
</dbReference>
<dbReference type="InterPro" id="IPR023213">
    <property type="entry name" value="CAT-like_dom_sf"/>
</dbReference>
<dbReference type="InterPro" id="IPR001242">
    <property type="entry name" value="Condensatn"/>
</dbReference>
<dbReference type="InterPro" id="IPR013120">
    <property type="entry name" value="Far_NAD-bd"/>
</dbReference>
<dbReference type="InterPro" id="IPR018201">
    <property type="entry name" value="Ketoacyl_synth_AS"/>
</dbReference>
<dbReference type="InterPro" id="IPR014031">
    <property type="entry name" value="Ketoacyl_synth_C"/>
</dbReference>
<dbReference type="InterPro" id="IPR014030">
    <property type="entry name" value="Ketoacyl_synth_N"/>
</dbReference>
<dbReference type="InterPro" id="IPR016036">
    <property type="entry name" value="Malonyl_transacylase_ACP-bd"/>
</dbReference>
<dbReference type="InterPro" id="IPR013217">
    <property type="entry name" value="Methyltransf_12"/>
</dbReference>
<dbReference type="InterPro" id="IPR036291">
    <property type="entry name" value="NAD(P)-bd_dom_sf"/>
</dbReference>
<dbReference type="InterPro" id="IPR032821">
    <property type="entry name" value="PKS_assoc"/>
</dbReference>
<dbReference type="InterPro" id="IPR020841">
    <property type="entry name" value="PKS_Beta-ketoAc_synthase_dom"/>
</dbReference>
<dbReference type="InterPro" id="IPR042104">
    <property type="entry name" value="PKS_dehydratase_sf"/>
</dbReference>
<dbReference type="InterPro" id="IPR020807">
    <property type="entry name" value="PKS_DH"/>
</dbReference>
<dbReference type="InterPro" id="IPR049551">
    <property type="entry name" value="PKS_DH_C"/>
</dbReference>
<dbReference type="InterPro" id="IPR049552">
    <property type="entry name" value="PKS_DH_N"/>
</dbReference>
<dbReference type="InterPro" id="IPR013968">
    <property type="entry name" value="PKS_KR"/>
</dbReference>
<dbReference type="InterPro" id="IPR049900">
    <property type="entry name" value="PKS_mFAS_DH"/>
</dbReference>
<dbReference type="InterPro" id="IPR050091">
    <property type="entry name" value="PKS_NRPS_Biosynth_Enz"/>
</dbReference>
<dbReference type="InterPro" id="IPR020806">
    <property type="entry name" value="PKS_PP-bd"/>
</dbReference>
<dbReference type="InterPro" id="IPR009081">
    <property type="entry name" value="PP-bd_ACP"/>
</dbReference>
<dbReference type="InterPro" id="IPR006162">
    <property type="entry name" value="Ppantetheine_attach_site"/>
</dbReference>
<dbReference type="InterPro" id="IPR029063">
    <property type="entry name" value="SAM-dependent_MTases_sf"/>
</dbReference>
<dbReference type="InterPro" id="IPR016039">
    <property type="entry name" value="Thiolase-like"/>
</dbReference>
<dbReference type="NCBIfam" id="TIGR01733">
    <property type="entry name" value="AA-adenyl-dom"/>
    <property type="match status" value="1"/>
</dbReference>
<dbReference type="PANTHER" id="PTHR43775">
    <property type="entry name" value="FATTY ACID SYNTHASE"/>
    <property type="match status" value="1"/>
</dbReference>
<dbReference type="PANTHER" id="PTHR43775:SF37">
    <property type="entry name" value="SI:DKEY-61P9.11"/>
    <property type="match status" value="1"/>
</dbReference>
<dbReference type="Pfam" id="PF00698">
    <property type="entry name" value="Acyl_transf_1"/>
    <property type="match status" value="1"/>
</dbReference>
<dbReference type="Pfam" id="PF00501">
    <property type="entry name" value="AMP-binding"/>
    <property type="match status" value="1"/>
</dbReference>
<dbReference type="Pfam" id="PF00668">
    <property type="entry name" value="Condensation"/>
    <property type="match status" value="1"/>
</dbReference>
<dbReference type="Pfam" id="PF16197">
    <property type="entry name" value="KAsynt_C_assoc"/>
    <property type="match status" value="1"/>
</dbReference>
<dbReference type="Pfam" id="PF00109">
    <property type="entry name" value="ketoacyl-synt"/>
    <property type="match status" value="1"/>
</dbReference>
<dbReference type="Pfam" id="PF02801">
    <property type="entry name" value="Ketoacyl-synt_C"/>
    <property type="match status" value="1"/>
</dbReference>
<dbReference type="Pfam" id="PF08659">
    <property type="entry name" value="KR"/>
    <property type="match status" value="1"/>
</dbReference>
<dbReference type="Pfam" id="PF08242">
    <property type="entry name" value="Methyltransf_12"/>
    <property type="match status" value="1"/>
</dbReference>
<dbReference type="Pfam" id="PF07993">
    <property type="entry name" value="NAD_binding_4"/>
    <property type="match status" value="1"/>
</dbReference>
<dbReference type="Pfam" id="PF21089">
    <property type="entry name" value="PKS_DH_N"/>
    <property type="match status" value="1"/>
</dbReference>
<dbReference type="Pfam" id="PF00550">
    <property type="entry name" value="PP-binding"/>
    <property type="match status" value="1"/>
</dbReference>
<dbReference type="Pfam" id="PF14765">
    <property type="entry name" value="PS-DH"/>
    <property type="match status" value="1"/>
</dbReference>
<dbReference type="SMART" id="SM00827">
    <property type="entry name" value="PKS_AT"/>
    <property type="match status" value="1"/>
</dbReference>
<dbReference type="SMART" id="SM00826">
    <property type="entry name" value="PKS_DH"/>
    <property type="match status" value="1"/>
</dbReference>
<dbReference type="SMART" id="SM00822">
    <property type="entry name" value="PKS_KR"/>
    <property type="match status" value="1"/>
</dbReference>
<dbReference type="SMART" id="SM00825">
    <property type="entry name" value="PKS_KS"/>
    <property type="match status" value="1"/>
</dbReference>
<dbReference type="SMART" id="SM00823">
    <property type="entry name" value="PKS_PP"/>
    <property type="match status" value="2"/>
</dbReference>
<dbReference type="SUPFAM" id="SSF56801">
    <property type="entry name" value="Acetyl-CoA synthetase-like"/>
    <property type="match status" value="1"/>
</dbReference>
<dbReference type="SUPFAM" id="SSF47336">
    <property type="entry name" value="ACP-like"/>
    <property type="match status" value="2"/>
</dbReference>
<dbReference type="SUPFAM" id="SSF52777">
    <property type="entry name" value="CoA-dependent acyltransferases"/>
    <property type="match status" value="2"/>
</dbReference>
<dbReference type="SUPFAM" id="SSF52151">
    <property type="entry name" value="FabD/lysophospholipase-like"/>
    <property type="match status" value="1"/>
</dbReference>
<dbReference type="SUPFAM" id="SSF51735">
    <property type="entry name" value="NAD(P)-binding Rossmann-fold domains"/>
    <property type="match status" value="2"/>
</dbReference>
<dbReference type="SUPFAM" id="SSF55048">
    <property type="entry name" value="Probable ACP-binding domain of malonyl-CoA ACP transacylase"/>
    <property type="match status" value="1"/>
</dbReference>
<dbReference type="SUPFAM" id="SSF53335">
    <property type="entry name" value="S-adenosyl-L-methionine-dependent methyltransferases"/>
    <property type="match status" value="1"/>
</dbReference>
<dbReference type="SUPFAM" id="SSF53901">
    <property type="entry name" value="Thiolase-like"/>
    <property type="match status" value="1"/>
</dbReference>
<dbReference type="PROSITE" id="PS00455">
    <property type="entry name" value="AMP_BINDING"/>
    <property type="match status" value="1"/>
</dbReference>
<dbReference type="PROSITE" id="PS50075">
    <property type="entry name" value="CARRIER"/>
    <property type="match status" value="2"/>
</dbReference>
<dbReference type="PROSITE" id="PS00606">
    <property type="entry name" value="KS3_1"/>
    <property type="match status" value="1"/>
</dbReference>
<dbReference type="PROSITE" id="PS52004">
    <property type="entry name" value="KS3_2"/>
    <property type="match status" value="1"/>
</dbReference>
<dbReference type="PROSITE" id="PS00012">
    <property type="entry name" value="PHOSPHOPANTETHEINE"/>
    <property type="match status" value="2"/>
</dbReference>
<dbReference type="PROSITE" id="PS52019">
    <property type="entry name" value="PKS_MFAS_DH"/>
    <property type="match status" value="1"/>
</dbReference>
<evidence type="ECO:0000255" key="1"/>
<evidence type="ECO:0000255" key="2">
    <source>
        <dbReference type="PROSITE-ProRule" id="PRU00258"/>
    </source>
</evidence>
<evidence type="ECO:0000255" key="3">
    <source>
        <dbReference type="PROSITE-ProRule" id="PRU01348"/>
    </source>
</evidence>
<evidence type="ECO:0000255" key="4">
    <source>
        <dbReference type="PROSITE-ProRule" id="PRU01363"/>
    </source>
</evidence>
<evidence type="ECO:0000255" key="5">
    <source>
        <dbReference type="PROSITE-ProRule" id="PRU10022"/>
    </source>
</evidence>
<evidence type="ECO:0000256" key="6">
    <source>
        <dbReference type="SAM" id="MobiDB-lite"/>
    </source>
</evidence>
<evidence type="ECO:0000269" key="7">
    <source>
    </source>
</evidence>
<evidence type="ECO:0000303" key="8">
    <source>
    </source>
</evidence>
<evidence type="ECO:0000305" key="9"/>
<evidence type="ECO:0000305" key="10">
    <source>
    </source>
</evidence>
<sequence>MSGQDPVKESGQREPIAVVGSGFRFPGSSNNPSKLWDLLVKPRDLLTKIPENRFNSDAFYHPKPFHHGTSDVRESYFLEEDHRQFDAAFFNIKPVEVHAIDPQQRILMEAVYESLEAAGLSMESLAGSRTGVYVGLMCADYVDLLNNDVNSLPTYTPTGTARSIMSNRISYFFDWHGPSMTIDTACSSSLVAVHQAVQLLRSGDSDVAVAAGANLMLGPLPYIAESKLQMLSSNSRSRMWDIDASGYARGEGVAAVVLKRLSSAIADGDQIECIIRESGINQDGRTKGITMPSSVAQADLISRTYAKAGLNPRDPTERCQYFEAHGTGTAAGDPKEAEAISKAFFHPGEDISGKTDPLYVGSIKTVIGHTEGTAGLAGLLKASLAVQHGIVPPNLLFNQLSPAVEPFYTNLEVLTSPRPWPKLAEGTPRRASINSFGFGGTNAHCIIENYIPSPAHTDRAITTRQFTPFNFSAASEKSLRGILTDYSNYLRLNPEVSLQDLSYTLYARRSEHAVRVHISAGSTTDLYTRIDDLLQVPSSGGNAQSIGTRSKILSRPVRALGVFTGQGAQWPSMGRELVLNSPYAKEVVQKLDLVLQSLPEPERPDWSLMYELTCDASQSRLNTAVIAQPLCTVVQIILFDLLSSAGVKLQAVVGHSSGEIAAAYAAGYLTREDALKIAYYRGYFTNLTPSDRPGAMMAIGTSAEDAEELCSLPMFQGRLAVAAVNSSSSVTISGDRDAIEQAKEVLEDEKKFARLLKVDKAYHSSHMVPCAEGYLEALKNSEIHPLSGTDDCVWHSSTHKNKYSHGDGALAGQYWADNMIQPVLFSHAVEAAASAGDAFDIAIEVGPHPALKGPALQTLQEVQKDTIPYTGLLNRGKDDIEALSDALGYLWTQFTPSLIDFRGFDLLASGGEQRSLIRNLPTYHWDHDKIFWHKSRAVKAFLGQKNIPNPLLGSRTTDVMEQEIRWRNLLRLSELPWVRGHQLQGQVIYPATAYISTAVEAARFLVPKGDNIALIEVEDFSLGKPLVFAEDAAGIETVFTLSDIAKENDTTYSASFIYHASTNAETEQLSTHAIGRVIVITGETSSHWLPSRQKDLPNLVDIPEDRFYASLEPLGYAYSGYFKTMSSIKRRLNFSSTKIRVPPQDDEPEKMLLHPALLDTALQGIFLAYCWPGDGSLEQLHVPTGIKNFRVNVGLCQQVLTPETDVSSCTQLTGNPLATKHLNGDVEIYADDGAGLVQMEGLRVVAFAEQTEDADRAIFSEHVWDVLAPNCERAMGGKRATLQDYEFAYGMERVVVYYMKQLVTLFPESLRKIMNLEWHFECMFAFFTDVLTTLEAGERRTARREWLQDTAADVEGIKARYAHTVDMQLTCAVGDNLPAVLRGESTILQHLTKDNLLNRFYEVGLGLKEVSGYLGKIVEQVVHRHPRMKILEIGKSGTGGATKVIMRGIGRSFSSYTYTDISPNFFESAQEVFSAVADKMIFKTLDVEKDITEQSFEEHSYDLVVASLVLHATTNLKRTLTNARRLLKPGGYLIFQEICDNDIARVGFLICAVPGWWLGQDDGRKLSPCVSTSEWHNLLLETGFSGADSPMPEYDAAPYPLAVIVSQAVDDRIALLREPLSLVQNDASVGEPWDLVLVGGQTSKTAMIIEQISGLITSSGVTHSVFKTIDEVDGTRISPTTAILCLADLDEPVFKGLSSTTLEGLQRLFETQRTVLWITQGCRSEDPWMNMSVGLGRTLVLENPDLALQFLDLEPGVEPNPRQLLEVLLRLRQSDIWEKEGKFDDVLWTNEHELAYDKGDLTLSRVHLSGALNDRYNAAKRTVLEAKNPQETPLNLSLGPSLKQFLVLDDVLVAKTLSSWELKDDSETLIKVTHSLLMPALAAPTPLYLILGTINKTKKSVLSIADNNGSYALVASNKVLAIDVPAGQESQLLSLFNTRLQVDSMLSLCESDSTLLIHEPSPDLASAIAACGSSGKINVVFTTSTSSGDSTWTRIDAYSTQRAIRSLLPENVSVFIDCSAGSQSRRTASLIASCLLPSCFQTTISGVQSLQRIRGLSPTDLCQKLNDALAWASKELAAPSNPGTLPSIKLETLIDDSAVASTTQAVVDWSTATSVPVQVSTVDNHVTFKGNNTYVLFGLTSDLAQSICDWMVSRGARNIVLTSRNPKIDSNWIELLKGAGVRLEAFANDITNKDALSSLVHHIRKNFPPIAGVAHGAMVLDDVSFFEMPYEKMTKVLGPKVQGAILLDEIFQDTSLDFFVFFSSVTAIAGNRGQSAYTSANMFMTSLASQRRDKGLAASILHLGAVMGVGYINRGFSDAFFTTLRRAGFMMMSERGLHLLFGEAVLASNPHSGRNPEVITALELSRLGDKPPLWTKFPRFQHCLQADDGANKRAKKKTAAVSTKLKLAEATTAEEILEIVQDAFYLKLQVALQIPDETDKSQVLASGTDDLGIDSLVAVEIRSWFLKELETEIPVFKVLSGGSVTQLVEYAIGSMPAELTPNRADSAKASEPEPEAPATLMPPPDSVSSSPSSLPKTSASGSSQQMSEGSSKTSEQGDAQDKKEESPSESVNDISELTYEKVLPVSPGQSRFWFLKHLLEDQTTANNTIWVSIQGTIRLNDLEMAIRKVAARHEALRTSFFMDENQKPIQAISETSRLYLEKKTLSSGSQAEREFEGLKKHVYDIEHGECMRLVYLEVTDTESYLLIGSHHIIMDGISLEVFLKDIEKAYNGQSLSNQVYQYSDYSEKLRQELEQGTMQEEINYWKSEFADVPSPLPLLPFAAEKQRKSLAAYSHTSVSRLVDPRVARQISNTCHKLKANVFHFYLGVFEVLLFKLFGNNDVCIGMADANRWNEKVSQSIGMYLNLLPLRFHLDGRQSFEAMLKDTRRKAYLAMSNSRLPFDVLLDNVICERSSAFSPLFQAFINYRQGVNEKRVLGNATGATKELSLPRAGYDISLDIIENPGNDTRVTVMLQKALYSDNESSRVLDLYFKLLNDLSSSSKKMLEEVSLFTEQEISNSIQLGQGPVLPSQWPETLVHRIDAMIAVHTDKVALKEITGKSWTYLQLEEEINRVSSVLIQANVTSGSTVAIYQEASPNFVFSLLAVLRIGAIYVPLDCNLPEGRLRLVLAECKPSALLADGKTLSQIGSLGLSPSVTILDVSRLPAASASISPVFTKAANPAAILFTSGSTGVPKGVVLSHGSLRNHVEALVHTHGFGSETVLQQSSVGFDMSMNQVFMALANGGSLVIVPESLRKDSSAIAKILLEQNITYTSATPSEYFAWLRHGSDDLLRNKSWKYATAGGEKFTPKLLQAFQKLKSAFSHSFHAFNAYGPTECSMSSNELEVNLDGHSAQFITAGRALPNYAVYIVDENATPQTIEIPGEICIAGAGVALEYLNNPVETAKKFLKDPFASVSAIERGWNRMYRTGDKGVLRPDGTLEILGRIEGDTQIKLRGLRIEMQDIEQSILKAGEGRVKEAIVTPRGDPTILVAHAVVSPIVSIDNEREYLRGLAASLPLPQYMRPAAIIPIATMPLNASGKIDRRALQNLDIPSTLQQKTRSKRKLTDTESKLAQIWVEVLPQQLQEVYAIDETSDFFQVGGNSMLLIELRELVKKRFQVHLPLLRFFEHSTLGAMAAAIQDTSPGEKLEINWDVETEVPSAYSELNTQEPAQSHSSHKTIVLTGATGFLGKYLLNLLTEAPDVDKIHCIAIRNREKLANFTNSAKVVIHDGDLASPRCGLSEADATSVFGSANVIIHNGADVSFLKTYSSLRASNVLSTKELVKLALPHHIPIHYISTATVGKLNKSDSLAPESLAQYPPGPSFVDGYAASKWASEVFLEKTTRQFGLPTFIHRPSSITGDGAGENDIVPSVLKYSAMIKALPDSSKWTGYIDLITVEKAAAGIADSVLQGRLVNVTATEAEYLHHAGEKVIPAQSIKTILTADDGPQWESVSMKNWVEKAIQNGMNPLVGEFLLSIDKGQGMQIGQKLLSKTDGSKNEF</sequence>
<keyword id="KW-0436">Ligase</keyword>
<keyword id="KW-0489">Methyltransferase</keyword>
<keyword id="KW-0511">Multifunctional enzyme</keyword>
<keyword id="KW-0560">Oxidoreductase</keyword>
<keyword id="KW-0596">Phosphopantetheine</keyword>
<keyword id="KW-0597">Phosphoprotein</keyword>
<keyword id="KW-0677">Repeat</keyword>
<keyword id="KW-0808">Transferase</keyword>
<reference key="1">
    <citation type="journal article" date="2021" name="Acta Pharm. Sin. B (APSB)">
        <title>Tricarbocyclic core formation of tyrosine-decahydrofluorenes implies a three-enzyme cascade with XenF-mediated sigmatropic rearrangement as a prerequisite.</title>
        <authorList>
            <person name="Liu Z."/>
            <person name="Li W."/>
            <person name="Zhang P."/>
            <person name="Fan J."/>
            <person name="Zhang F."/>
            <person name="Wang C."/>
            <person name="Li S."/>
            <person name="Sun Y."/>
            <person name="Chen S."/>
            <person name="Yin W."/>
        </authorList>
    </citation>
    <scope>NUCLEOTIDE SEQUENCE [GENOMIC DNA]</scope>
    <scope>FUNCTION</scope>
    <scope>DISRUPTION PHENOTYPE</scope>
    <scope>CATALYTIC ACTIVITY</scope>
    <scope>PATHWAY</scope>
    <source>
        <strain>ML-31</strain>
    </source>
</reference>
<organism>
    <name type="scientific">Xenoacremonium sinensis</name>
    <name type="common">Endophyte fungus</name>
    <dbReference type="NCBI Taxonomy" id="2480843"/>
    <lineage>
        <taxon>Eukaryota</taxon>
        <taxon>Fungi</taxon>
        <taxon>Dikarya</taxon>
        <taxon>Ascomycota</taxon>
        <taxon>Pezizomycotina</taxon>
        <taxon>Sordariomycetes</taxon>
        <taxon>Hypocreomycetidae</taxon>
        <taxon>Hypocreales</taxon>
        <taxon>Nectriaceae</taxon>
        <taxon>Xenoacremonium</taxon>
    </lineage>
</organism>
<protein>
    <recommendedName>
        <fullName evidence="8">Hybrid PKS-NRPS synthetase xenE</fullName>
        <ecNumber evidence="7">2.3.1.-</ecNumber>
        <ecNumber evidence="7">6.3.2.-</ecNumber>
    </recommendedName>
    <alternativeName>
        <fullName evidence="8">Xenoacremones biosynthesis cluster protein E</fullName>
    </alternativeName>
</protein>